<sequence>MAWNGRFGEDGEEERSLELSLALPGYFSSSGLQGNTSTAADGAKGNDGFKASRPAAPVVGWPPVRSFRRNLASSSSSSKPPRGGRDAAAAATGGKVARFVKVNMDGVPIGRKVDLAAHGGYGELSAAVDRLFRGLLAAQRDPTMATAAAAAAAGESCTGEEEAIAGLLDGGSGEYTLVYEDDEGDQMLVGDVPWNMFIAAARRLRVLRSSDLNASTIRAGSRKRAAAE</sequence>
<accession>P0C127</accession>
<protein>
    <recommendedName>
        <fullName>Auxin-responsive protein IAA16</fullName>
    </recommendedName>
    <alternativeName>
        <fullName>Indoleacetic acid-induced protein 16</fullName>
    </alternativeName>
</protein>
<reference key="1">
    <citation type="journal article" date="2005" name="Mol. Genet. Genomics">
        <title>A fine physical map of the rice chromosome 5.</title>
        <authorList>
            <person name="Cheng C.-H."/>
            <person name="Chung M.C."/>
            <person name="Liu S.-M."/>
            <person name="Chen S.-K."/>
            <person name="Kao F.Y."/>
            <person name="Lin S.-J."/>
            <person name="Hsiao S.-H."/>
            <person name="Tseng I.C."/>
            <person name="Hsing Y.-I.C."/>
            <person name="Wu H.-P."/>
            <person name="Chen C.-S."/>
            <person name="Shaw J.-F."/>
            <person name="Wu J."/>
            <person name="Matsumoto T."/>
            <person name="Sasaki T."/>
            <person name="Chen H.-C."/>
            <person name="Chow T.-Y."/>
        </authorList>
    </citation>
    <scope>NUCLEOTIDE SEQUENCE [LARGE SCALE GENOMIC DNA]</scope>
    <source>
        <strain>cv. Nipponbare</strain>
    </source>
</reference>
<reference key="2">
    <citation type="journal article" date="2005" name="Nature">
        <title>The map-based sequence of the rice genome.</title>
        <authorList>
            <consortium name="International rice genome sequencing project (IRGSP)"/>
        </authorList>
    </citation>
    <scope>NUCLEOTIDE SEQUENCE [LARGE SCALE GENOMIC DNA]</scope>
    <source>
        <strain>cv. Nipponbare</strain>
    </source>
</reference>
<reference key="3">
    <citation type="journal article" date="2013" name="Rice">
        <title>Improvement of the Oryza sativa Nipponbare reference genome using next generation sequence and optical map data.</title>
        <authorList>
            <person name="Kawahara Y."/>
            <person name="de la Bastide M."/>
            <person name="Hamilton J.P."/>
            <person name="Kanamori H."/>
            <person name="McCombie W.R."/>
            <person name="Ouyang S."/>
            <person name="Schwartz D.C."/>
            <person name="Tanaka T."/>
            <person name="Wu J."/>
            <person name="Zhou S."/>
            <person name="Childs K.L."/>
            <person name="Davidson R.M."/>
            <person name="Lin H."/>
            <person name="Quesada-Ocampo L."/>
            <person name="Vaillancourt B."/>
            <person name="Sakai H."/>
            <person name="Lee S.S."/>
            <person name="Kim J."/>
            <person name="Numa H."/>
            <person name="Itoh T."/>
            <person name="Buell C.R."/>
            <person name="Matsumoto T."/>
        </authorList>
    </citation>
    <scope>GENOME REANNOTATION</scope>
    <source>
        <strain>cv. Nipponbare</strain>
    </source>
</reference>
<reference key="4">
    <citation type="journal article" date="2006" name="Funct. Integr. Genomics">
        <title>Structure and expression analysis of early auxin-responsive Aux/IAA gene family in rice (Oryza sativa).</title>
        <authorList>
            <person name="Jain M."/>
            <person name="Kaur N."/>
            <person name="Garg R."/>
            <person name="Thakur J.K."/>
            <person name="Tyagi A.K."/>
            <person name="Khurana J.P."/>
        </authorList>
    </citation>
    <scope>TISSUE SPECIFICITY</scope>
    <scope>INDUCTION</scope>
    <scope>NOMENCLATURE</scope>
</reference>
<gene>
    <name type="primary">IAA16</name>
    <name type="ordered locus">Os05g0186900</name>
    <name type="ordered locus">LOC_Os05g09480</name>
</gene>
<proteinExistence type="evidence at transcript level"/>
<keyword id="KW-0927">Auxin signaling pathway</keyword>
<keyword id="KW-0539">Nucleus</keyword>
<keyword id="KW-1185">Reference proteome</keyword>
<keyword id="KW-0678">Repressor</keyword>
<keyword id="KW-0804">Transcription</keyword>
<keyword id="KW-0805">Transcription regulation</keyword>
<feature type="chain" id="PRO_0000223215" description="Auxin-responsive protein IAA16">
    <location>
        <begin position="1"/>
        <end position="228"/>
    </location>
</feature>
<feature type="domain" description="PB1" evidence="2">
    <location>
        <begin position="97"/>
        <end position="214"/>
    </location>
</feature>
<feature type="region of interest" description="Disordered" evidence="3">
    <location>
        <begin position="28"/>
        <end position="57"/>
    </location>
</feature>
<feature type="region of interest" description="Disordered" evidence="3">
    <location>
        <begin position="70"/>
        <end position="90"/>
    </location>
</feature>
<feature type="short sequence motif" description="EAR-like (transcriptional repression)" evidence="1">
    <location>
        <begin position="19"/>
        <end position="23"/>
    </location>
</feature>
<feature type="compositionally biased region" description="Polar residues" evidence="3">
    <location>
        <begin position="28"/>
        <end position="39"/>
    </location>
</feature>
<comment type="function">
    <text evidence="1">Aux/IAA proteins are short-lived transcriptional factors that function as repressors of early auxin response genes at low auxin concentrations.</text>
</comment>
<comment type="subunit">
    <text evidence="1">Homodimers and heterodimers.</text>
</comment>
<comment type="subcellular location">
    <subcellularLocation>
        <location evidence="1">Nucleus</location>
    </subcellularLocation>
</comment>
<comment type="tissue specificity">
    <text evidence="4">Expressed in roots, flowers and seedlings.</text>
</comment>
<comment type="induction">
    <text evidence="4">Not induced by auxin.</text>
</comment>
<comment type="similarity">
    <text evidence="5">Belongs to the Aux/IAA family.</text>
</comment>
<dbReference type="EMBL" id="AC093954">
    <property type="status" value="NOT_ANNOTATED_CDS"/>
    <property type="molecule type" value="Genomic_DNA"/>
</dbReference>
<dbReference type="EMBL" id="AP014961">
    <property type="status" value="NOT_ANNOTATED_CDS"/>
    <property type="molecule type" value="Genomic_DNA"/>
</dbReference>
<dbReference type="RefSeq" id="XP_015638327.1">
    <property type="nucleotide sequence ID" value="XM_015782841.1"/>
</dbReference>
<dbReference type="SMR" id="P0C127"/>
<dbReference type="FunCoup" id="P0C127">
    <property type="interactions" value="327"/>
</dbReference>
<dbReference type="STRING" id="39947.P0C127"/>
<dbReference type="PaxDb" id="39947-P0C127"/>
<dbReference type="InParanoid" id="P0C127"/>
<dbReference type="OrthoDB" id="615826at2759"/>
<dbReference type="Proteomes" id="UP000000763">
    <property type="component" value="Chromosome 5"/>
</dbReference>
<dbReference type="Proteomes" id="UP000059680">
    <property type="component" value="Chromosome 5"/>
</dbReference>
<dbReference type="GO" id="GO:0005634">
    <property type="term" value="C:nucleus"/>
    <property type="evidence" value="ECO:0007669"/>
    <property type="project" value="UniProtKB-SubCell"/>
</dbReference>
<dbReference type="GO" id="GO:0009734">
    <property type="term" value="P:auxin-activated signaling pathway"/>
    <property type="evidence" value="ECO:0007669"/>
    <property type="project" value="UniProtKB-KW"/>
</dbReference>
<dbReference type="GO" id="GO:0006355">
    <property type="term" value="P:regulation of DNA-templated transcription"/>
    <property type="evidence" value="ECO:0007669"/>
    <property type="project" value="InterPro"/>
</dbReference>
<dbReference type="FunFam" id="3.10.20.90:FF:000225">
    <property type="entry name" value="Auxin-responsive protein"/>
    <property type="match status" value="1"/>
</dbReference>
<dbReference type="Gene3D" id="3.10.20.90">
    <property type="entry name" value="Phosphatidylinositol 3-kinase Catalytic Subunit, Chain A, domain 1"/>
    <property type="match status" value="1"/>
</dbReference>
<dbReference type="InterPro" id="IPR033389">
    <property type="entry name" value="AUX/IAA_dom"/>
</dbReference>
<dbReference type="InterPro" id="IPR003311">
    <property type="entry name" value="AUX_IAA"/>
</dbReference>
<dbReference type="InterPro" id="IPR053793">
    <property type="entry name" value="PB1-like"/>
</dbReference>
<dbReference type="PANTHER" id="PTHR31734:SF33">
    <property type="entry name" value="AUXIN-RESPONSIVE PROTEIN IAA16"/>
    <property type="match status" value="1"/>
</dbReference>
<dbReference type="PANTHER" id="PTHR31734">
    <property type="entry name" value="AUXIN-RESPONSIVE PROTEIN IAA17"/>
    <property type="match status" value="1"/>
</dbReference>
<dbReference type="Pfam" id="PF02309">
    <property type="entry name" value="AUX_IAA"/>
    <property type="match status" value="1"/>
</dbReference>
<dbReference type="SUPFAM" id="SSF54277">
    <property type="entry name" value="CAD &amp; PB1 domains"/>
    <property type="match status" value="1"/>
</dbReference>
<dbReference type="PROSITE" id="PS51745">
    <property type="entry name" value="PB1"/>
    <property type="match status" value="1"/>
</dbReference>
<evidence type="ECO:0000250" key="1"/>
<evidence type="ECO:0000255" key="2">
    <source>
        <dbReference type="PROSITE-ProRule" id="PRU01081"/>
    </source>
</evidence>
<evidence type="ECO:0000256" key="3">
    <source>
        <dbReference type="SAM" id="MobiDB-lite"/>
    </source>
</evidence>
<evidence type="ECO:0000269" key="4">
    <source>
    </source>
</evidence>
<evidence type="ECO:0000305" key="5"/>
<name>IAA16_ORYSJ</name>
<organism>
    <name type="scientific">Oryza sativa subsp. japonica</name>
    <name type="common">Rice</name>
    <dbReference type="NCBI Taxonomy" id="39947"/>
    <lineage>
        <taxon>Eukaryota</taxon>
        <taxon>Viridiplantae</taxon>
        <taxon>Streptophyta</taxon>
        <taxon>Embryophyta</taxon>
        <taxon>Tracheophyta</taxon>
        <taxon>Spermatophyta</taxon>
        <taxon>Magnoliopsida</taxon>
        <taxon>Liliopsida</taxon>
        <taxon>Poales</taxon>
        <taxon>Poaceae</taxon>
        <taxon>BOP clade</taxon>
        <taxon>Oryzoideae</taxon>
        <taxon>Oryzeae</taxon>
        <taxon>Oryzinae</taxon>
        <taxon>Oryza</taxon>
        <taxon>Oryza sativa</taxon>
    </lineage>
</organism>